<sequence>MTRISRSAYAEIYGPTVVGGVGDRVRLADTLLLAEVEKDHTIFGEEVKFGGGKVIRDGMGQSQRLATDCVDTVITNALIIDAVTGIVKADIGIKDGLISGIGKAGNPDTQPGVTIIIGASTEVVAGEGLIVTAGAIDTHIHFICPQQIEEALATGTTTMIGGGTGPATGSLATTSTSGPWHMAAMLQALDAFPVNVGLFGKGSSSSHGALLEQVRAGAMGLKIHEDWASTPASIDTCLNVAEETDIQVAIHSDTLNESGFVEDTFAAFKGRTIHSFHTEGAGGGHAPDIIRAAGMPNVLPASTNPTMPFTRNTIDEHLDMVMVCHHLDPSIAEDLAFAESRIRRETIAAEDILHDLGAFSIMSSDSQAMGRVGEIVLRTWQTAHKMKLQRGPLQGDSERSDNERIKRYIAKYTINPAVAHGIAHLVGSVEVGKLADLVLWKPAFFGVKVNMVLKSGMAVSASIGDMGASISTPQPVQIRPMWGSHGKALRTSVAFVSQVSLSNPAVSELELNKRLEAVRGCRGVTKHDMVRNNWLPAISVDPQTYQVYADGQLLRCEALAELPMAQRYFLF</sequence>
<proteinExistence type="inferred from homology"/>
<accession>Q7W417</accession>
<name>URE1_BORPA</name>
<comment type="catalytic activity">
    <reaction evidence="1">
        <text>urea + 2 H2O + H(+) = hydrogencarbonate + 2 NH4(+)</text>
        <dbReference type="Rhea" id="RHEA:20557"/>
        <dbReference type="ChEBI" id="CHEBI:15377"/>
        <dbReference type="ChEBI" id="CHEBI:15378"/>
        <dbReference type="ChEBI" id="CHEBI:16199"/>
        <dbReference type="ChEBI" id="CHEBI:17544"/>
        <dbReference type="ChEBI" id="CHEBI:28938"/>
        <dbReference type="EC" id="3.5.1.5"/>
    </reaction>
</comment>
<comment type="cofactor">
    <cofactor evidence="1">
        <name>Ni cation</name>
        <dbReference type="ChEBI" id="CHEBI:25516"/>
    </cofactor>
    <text evidence="1">Binds 2 nickel ions per subunit.</text>
</comment>
<comment type="pathway">
    <text evidence="1">Nitrogen metabolism; urea degradation; CO(2) and NH(3) from urea (urease route): step 1/1.</text>
</comment>
<comment type="subunit">
    <text evidence="1">Heterotrimer of UreA (gamma), UreB (beta) and UreC (alpha) subunits. Three heterotrimers associate to form the active enzyme.</text>
</comment>
<comment type="subcellular location">
    <subcellularLocation>
        <location evidence="1">Cytoplasm</location>
    </subcellularLocation>
</comment>
<comment type="PTM">
    <text evidence="1">Carboxylation allows a single lysine to coordinate two nickel ions.</text>
</comment>
<comment type="similarity">
    <text evidence="1">Belongs to the metallo-dependent hydrolases superfamily. Urease alpha subunit family.</text>
</comment>
<gene>
    <name evidence="1" type="primary">ureC</name>
    <name type="ordered locus">BPP3855</name>
</gene>
<evidence type="ECO:0000255" key="1">
    <source>
        <dbReference type="HAMAP-Rule" id="MF_01953"/>
    </source>
</evidence>
<feature type="chain" id="PRO_0000234136" description="Urease subunit alpha">
    <location>
        <begin position="1"/>
        <end position="571"/>
    </location>
</feature>
<feature type="domain" description="Urease" evidence="1">
    <location>
        <begin position="134"/>
        <end position="571"/>
    </location>
</feature>
<feature type="active site" description="Proton donor" evidence="1">
    <location>
        <position position="325"/>
    </location>
</feature>
<feature type="binding site" evidence="1">
    <location>
        <position position="139"/>
    </location>
    <ligand>
        <name>Ni(2+)</name>
        <dbReference type="ChEBI" id="CHEBI:49786"/>
        <label>1</label>
    </ligand>
</feature>
<feature type="binding site" evidence="1">
    <location>
        <position position="141"/>
    </location>
    <ligand>
        <name>Ni(2+)</name>
        <dbReference type="ChEBI" id="CHEBI:49786"/>
        <label>1</label>
    </ligand>
</feature>
<feature type="binding site" description="via carbamate group" evidence="1">
    <location>
        <position position="222"/>
    </location>
    <ligand>
        <name>Ni(2+)</name>
        <dbReference type="ChEBI" id="CHEBI:49786"/>
        <label>1</label>
    </ligand>
</feature>
<feature type="binding site" description="via carbamate group" evidence="1">
    <location>
        <position position="222"/>
    </location>
    <ligand>
        <name>Ni(2+)</name>
        <dbReference type="ChEBI" id="CHEBI:49786"/>
        <label>2</label>
    </ligand>
</feature>
<feature type="binding site" evidence="1">
    <location>
        <position position="224"/>
    </location>
    <ligand>
        <name>substrate</name>
    </ligand>
</feature>
<feature type="binding site" evidence="1">
    <location>
        <position position="251"/>
    </location>
    <ligand>
        <name>Ni(2+)</name>
        <dbReference type="ChEBI" id="CHEBI:49786"/>
        <label>2</label>
    </ligand>
</feature>
<feature type="binding site" evidence="1">
    <location>
        <position position="277"/>
    </location>
    <ligand>
        <name>Ni(2+)</name>
        <dbReference type="ChEBI" id="CHEBI:49786"/>
        <label>2</label>
    </ligand>
</feature>
<feature type="binding site" evidence="1">
    <location>
        <position position="365"/>
    </location>
    <ligand>
        <name>Ni(2+)</name>
        <dbReference type="ChEBI" id="CHEBI:49786"/>
        <label>1</label>
    </ligand>
</feature>
<feature type="modified residue" description="N6-carboxylysine" evidence="1">
    <location>
        <position position="222"/>
    </location>
</feature>
<keyword id="KW-0963">Cytoplasm</keyword>
<keyword id="KW-0378">Hydrolase</keyword>
<keyword id="KW-0479">Metal-binding</keyword>
<keyword id="KW-0533">Nickel</keyword>
<organism>
    <name type="scientific">Bordetella parapertussis (strain 12822 / ATCC BAA-587 / NCTC 13253)</name>
    <dbReference type="NCBI Taxonomy" id="257311"/>
    <lineage>
        <taxon>Bacteria</taxon>
        <taxon>Pseudomonadati</taxon>
        <taxon>Pseudomonadota</taxon>
        <taxon>Betaproteobacteria</taxon>
        <taxon>Burkholderiales</taxon>
        <taxon>Alcaligenaceae</taxon>
        <taxon>Bordetella</taxon>
    </lineage>
</organism>
<protein>
    <recommendedName>
        <fullName evidence="1">Urease subunit alpha</fullName>
        <ecNumber evidence="1">3.5.1.5</ecNumber>
    </recommendedName>
    <alternativeName>
        <fullName evidence="1">Urea amidohydrolase subunit alpha</fullName>
    </alternativeName>
</protein>
<reference key="1">
    <citation type="journal article" date="2003" name="Nat. Genet.">
        <title>Comparative analysis of the genome sequences of Bordetella pertussis, Bordetella parapertussis and Bordetella bronchiseptica.</title>
        <authorList>
            <person name="Parkhill J."/>
            <person name="Sebaihia M."/>
            <person name="Preston A."/>
            <person name="Murphy L.D."/>
            <person name="Thomson N.R."/>
            <person name="Harris D.E."/>
            <person name="Holden M.T.G."/>
            <person name="Churcher C.M."/>
            <person name="Bentley S.D."/>
            <person name="Mungall K.L."/>
            <person name="Cerdeno-Tarraga A.-M."/>
            <person name="Temple L."/>
            <person name="James K.D."/>
            <person name="Harris B."/>
            <person name="Quail M.A."/>
            <person name="Achtman M."/>
            <person name="Atkin R."/>
            <person name="Baker S."/>
            <person name="Basham D."/>
            <person name="Bason N."/>
            <person name="Cherevach I."/>
            <person name="Chillingworth T."/>
            <person name="Collins M."/>
            <person name="Cronin A."/>
            <person name="Davis P."/>
            <person name="Doggett J."/>
            <person name="Feltwell T."/>
            <person name="Goble A."/>
            <person name="Hamlin N."/>
            <person name="Hauser H."/>
            <person name="Holroyd S."/>
            <person name="Jagels K."/>
            <person name="Leather S."/>
            <person name="Moule S."/>
            <person name="Norberczak H."/>
            <person name="O'Neil S."/>
            <person name="Ormond D."/>
            <person name="Price C."/>
            <person name="Rabbinowitsch E."/>
            <person name="Rutter S."/>
            <person name="Sanders M."/>
            <person name="Saunders D."/>
            <person name="Seeger K."/>
            <person name="Sharp S."/>
            <person name="Simmonds M."/>
            <person name="Skelton J."/>
            <person name="Squares R."/>
            <person name="Squares S."/>
            <person name="Stevens K."/>
            <person name="Unwin L."/>
            <person name="Whitehead S."/>
            <person name="Barrell B.G."/>
            <person name="Maskell D.J."/>
        </authorList>
    </citation>
    <scope>NUCLEOTIDE SEQUENCE [LARGE SCALE GENOMIC DNA]</scope>
    <source>
        <strain>12822 / ATCC BAA-587 / NCTC 13253</strain>
    </source>
</reference>
<dbReference type="EC" id="3.5.1.5" evidence="1"/>
<dbReference type="EMBL" id="BX640435">
    <property type="protein sequence ID" value="CAE39138.1"/>
    <property type="molecule type" value="Genomic_DNA"/>
</dbReference>
<dbReference type="RefSeq" id="WP_010929280.1">
    <property type="nucleotide sequence ID" value="NC_002928.3"/>
</dbReference>
<dbReference type="SMR" id="Q7W417"/>
<dbReference type="MEROPS" id="M38.982"/>
<dbReference type="GeneID" id="93205653"/>
<dbReference type="KEGG" id="bpa:BPP3855"/>
<dbReference type="HOGENOM" id="CLU_000980_0_0_4"/>
<dbReference type="UniPathway" id="UPA00258">
    <property type="reaction ID" value="UER00370"/>
</dbReference>
<dbReference type="Proteomes" id="UP000001421">
    <property type="component" value="Chromosome"/>
</dbReference>
<dbReference type="GO" id="GO:0005737">
    <property type="term" value="C:cytoplasm"/>
    <property type="evidence" value="ECO:0007669"/>
    <property type="project" value="UniProtKB-SubCell"/>
</dbReference>
<dbReference type="GO" id="GO:0016151">
    <property type="term" value="F:nickel cation binding"/>
    <property type="evidence" value="ECO:0007669"/>
    <property type="project" value="UniProtKB-UniRule"/>
</dbReference>
<dbReference type="GO" id="GO:0009039">
    <property type="term" value="F:urease activity"/>
    <property type="evidence" value="ECO:0007669"/>
    <property type="project" value="UniProtKB-UniRule"/>
</dbReference>
<dbReference type="GO" id="GO:0043419">
    <property type="term" value="P:urea catabolic process"/>
    <property type="evidence" value="ECO:0007669"/>
    <property type="project" value="UniProtKB-UniRule"/>
</dbReference>
<dbReference type="CDD" id="cd00375">
    <property type="entry name" value="Urease_alpha"/>
    <property type="match status" value="1"/>
</dbReference>
<dbReference type="Gene3D" id="3.20.20.140">
    <property type="entry name" value="Metal-dependent hydrolases"/>
    <property type="match status" value="1"/>
</dbReference>
<dbReference type="Gene3D" id="2.30.40.10">
    <property type="entry name" value="Urease, subunit C, domain 1"/>
    <property type="match status" value="1"/>
</dbReference>
<dbReference type="HAMAP" id="MF_01953">
    <property type="entry name" value="Urease_alpha"/>
    <property type="match status" value="1"/>
</dbReference>
<dbReference type="InterPro" id="IPR006680">
    <property type="entry name" value="Amidohydro-rel"/>
</dbReference>
<dbReference type="InterPro" id="IPR011059">
    <property type="entry name" value="Metal-dep_hydrolase_composite"/>
</dbReference>
<dbReference type="InterPro" id="IPR032466">
    <property type="entry name" value="Metal_Hydrolase"/>
</dbReference>
<dbReference type="InterPro" id="IPR011612">
    <property type="entry name" value="Urease_alpha_N_dom"/>
</dbReference>
<dbReference type="InterPro" id="IPR050112">
    <property type="entry name" value="Urease_alpha_subunit"/>
</dbReference>
<dbReference type="InterPro" id="IPR017950">
    <property type="entry name" value="Urease_AS"/>
</dbReference>
<dbReference type="InterPro" id="IPR005848">
    <property type="entry name" value="Urease_asu"/>
</dbReference>
<dbReference type="InterPro" id="IPR017951">
    <property type="entry name" value="Urease_asu_c"/>
</dbReference>
<dbReference type="InterPro" id="IPR029754">
    <property type="entry name" value="Urease_Ni-bd"/>
</dbReference>
<dbReference type="NCBIfam" id="NF009686">
    <property type="entry name" value="PRK13207.1"/>
    <property type="match status" value="1"/>
</dbReference>
<dbReference type="NCBIfam" id="TIGR01792">
    <property type="entry name" value="urease_alph"/>
    <property type="match status" value="1"/>
</dbReference>
<dbReference type="PANTHER" id="PTHR43440">
    <property type="entry name" value="UREASE"/>
    <property type="match status" value="1"/>
</dbReference>
<dbReference type="PANTHER" id="PTHR43440:SF1">
    <property type="entry name" value="UREASE"/>
    <property type="match status" value="1"/>
</dbReference>
<dbReference type="Pfam" id="PF01979">
    <property type="entry name" value="Amidohydro_1"/>
    <property type="match status" value="1"/>
</dbReference>
<dbReference type="Pfam" id="PF00449">
    <property type="entry name" value="Urease_alpha"/>
    <property type="match status" value="1"/>
</dbReference>
<dbReference type="PRINTS" id="PR01752">
    <property type="entry name" value="UREASE"/>
</dbReference>
<dbReference type="SUPFAM" id="SSF51338">
    <property type="entry name" value="Composite domain of metallo-dependent hydrolases"/>
    <property type="match status" value="1"/>
</dbReference>
<dbReference type="SUPFAM" id="SSF51556">
    <property type="entry name" value="Metallo-dependent hydrolases"/>
    <property type="match status" value="1"/>
</dbReference>
<dbReference type="PROSITE" id="PS01120">
    <property type="entry name" value="UREASE_1"/>
    <property type="match status" value="1"/>
</dbReference>
<dbReference type="PROSITE" id="PS00145">
    <property type="entry name" value="UREASE_2"/>
    <property type="match status" value="1"/>
</dbReference>
<dbReference type="PROSITE" id="PS51368">
    <property type="entry name" value="UREASE_3"/>
    <property type="match status" value="1"/>
</dbReference>